<protein>
    <recommendedName>
        <fullName>Apyrase 1</fullName>
        <shortName>AtAPY1</shortName>
        <ecNumber>3.6.1.5</ecNumber>
    </recommendedName>
    <alternativeName>
        <fullName>ATP-diphosphatase</fullName>
    </alternativeName>
    <alternativeName>
        <fullName>ATP-diphosphohydrolase</fullName>
    </alternativeName>
    <alternativeName>
        <fullName>Adenosine diphosphatase</fullName>
        <shortName>ADPase</shortName>
    </alternativeName>
    <alternativeName>
        <fullName>NTPDase</fullName>
    </alternativeName>
    <alternativeName>
        <fullName>Nucleoside triphosphate diphosphohydrolase 1</fullName>
    </alternativeName>
</protein>
<reference key="1">
    <citation type="journal article" date="2000" name="Plant Physiol. Biochem.">
        <title>Molecular and biochemical comparison of two different apyrases from Arabidopsis thaliana.</title>
        <authorList>
            <person name="Steinebrunner I.A."/>
            <person name="Jeter C.R."/>
            <person name="Song C."/>
            <person name="Roux S.J."/>
        </authorList>
    </citation>
    <scope>NUCLEOTIDE SEQUENCE [MRNA]</scope>
    <scope>COFACTOR</scope>
    <scope>FUNCTION</scope>
    <scope>BIOPHYSICOCHEMICAL PROPERTIES</scope>
    <scope>TISSUE SPECIFICITY</scope>
</reference>
<reference key="2">
    <citation type="journal article" date="2012" name="Plant Physiol.">
        <title>Isolation and proteomic characterization of the Arabidopsis Golgi defines functional and novel components involved in plant cell wall biosynthesis.</title>
        <authorList>
            <person name="Parsons H.T."/>
            <person name="Christiansen K."/>
            <person name="Knierim B."/>
            <person name="Carroll A."/>
            <person name="Ito J."/>
            <person name="Batth T.S."/>
            <person name="Smith-Moritz A.M."/>
            <person name="Morrison S."/>
            <person name="McInerney P."/>
            <person name="Hadi M.Z."/>
            <person name="Auer M."/>
            <person name="Mukhopadhyay A."/>
            <person name="Petzold C.J."/>
            <person name="Scheller H.V."/>
            <person name="Loque D."/>
            <person name="Heazlewood J.L."/>
        </authorList>
    </citation>
    <scope>NUCLEOTIDE SEQUENCE [MRNA]</scope>
    <scope>SUBCELLULAR LOCATION</scope>
    <source>
        <strain>cv. Landsberg erecta</strain>
    </source>
</reference>
<reference key="3">
    <citation type="journal article" date="2000" name="Nature">
        <title>Sequence and analysis of chromosome 3 of the plant Arabidopsis thaliana.</title>
        <authorList>
            <person name="Salanoubat M."/>
            <person name="Lemcke K."/>
            <person name="Rieger M."/>
            <person name="Ansorge W."/>
            <person name="Unseld M."/>
            <person name="Fartmann B."/>
            <person name="Valle G."/>
            <person name="Bloecker H."/>
            <person name="Perez-Alonso M."/>
            <person name="Obermaier B."/>
            <person name="Delseny M."/>
            <person name="Boutry M."/>
            <person name="Grivell L.A."/>
            <person name="Mache R."/>
            <person name="Puigdomenech P."/>
            <person name="De Simone V."/>
            <person name="Choisne N."/>
            <person name="Artiguenave F."/>
            <person name="Robert C."/>
            <person name="Brottier P."/>
            <person name="Wincker P."/>
            <person name="Cattolico L."/>
            <person name="Weissenbach J."/>
            <person name="Saurin W."/>
            <person name="Quetier F."/>
            <person name="Schaefer M."/>
            <person name="Mueller-Auer S."/>
            <person name="Gabel C."/>
            <person name="Fuchs M."/>
            <person name="Benes V."/>
            <person name="Wurmbach E."/>
            <person name="Drzonek H."/>
            <person name="Erfle H."/>
            <person name="Jordan N."/>
            <person name="Bangert S."/>
            <person name="Wiedelmann R."/>
            <person name="Kranz H."/>
            <person name="Voss H."/>
            <person name="Holland R."/>
            <person name="Brandt P."/>
            <person name="Nyakatura G."/>
            <person name="Vezzi A."/>
            <person name="D'Angelo M."/>
            <person name="Pallavicini A."/>
            <person name="Toppo S."/>
            <person name="Simionati B."/>
            <person name="Conrad A."/>
            <person name="Hornischer K."/>
            <person name="Kauer G."/>
            <person name="Loehnert T.-H."/>
            <person name="Nordsiek G."/>
            <person name="Reichelt J."/>
            <person name="Scharfe M."/>
            <person name="Schoen O."/>
            <person name="Bargues M."/>
            <person name="Terol J."/>
            <person name="Climent J."/>
            <person name="Navarro P."/>
            <person name="Collado C."/>
            <person name="Perez-Perez A."/>
            <person name="Ottenwaelder B."/>
            <person name="Duchemin D."/>
            <person name="Cooke R."/>
            <person name="Laudie M."/>
            <person name="Berger-Llauro C."/>
            <person name="Purnelle B."/>
            <person name="Masuy D."/>
            <person name="de Haan M."/>
            <person name="Maarse A.C."/>
            <person name="Alcaraz J.-P."/>
            <person name="Cottet A."/>
            <person name="Casacuberta E."/>
            <person name="Monfort A."/>
            <person name="Argiriou A."/>
            <person name="Flores M."/>
            <person name="Liguori R."/>
            <person name="Vitale D."/>
            <person name="Mannhaupt G."/>
            <person name="Haase D."/>
            <person name="Schoof H."/>
            <person name="Rudd S."/>
            <person name="Zaccaria P."/>
            <person name="Mewes H.-W."/>
            <person name="Mayer K.F.X."/>
            <person name="Kaul S."/>
            <person name="Town C.D."/>
            <person name="Koo H.L."/>
            <person name="Tallon L.J."/>
            <person name="Jenkins J."/>
            <person name="Rooney T."/>
            <person name="Rizzo M."/>
            <person name="Walts A."/>
            <person name="Utterback T."/>
            <person name="Fujii C.Y."/>
            <person name="Shea T.P."/>
            <person name="Creasy T.H."/>
            <person name="Haas B."/>
            <person name="Maiti R."/>
            <person name="Wu D."/>
            <person name="Peterson J."/>
            <person name="Van Aken S."/>
            <person name="Pai G."/>
            <person name="Militscher J."/>
            <person name="Sellers P."/>
            <person name="Gill J.E."/>
            <person name="Feldblyum T.V."/>
            <person name="Preuss D."/>
            <person name="Lin X."/>
            <person name="Nierman W.C."/>
            <person name="Salzberg S.L."/>
            <person name="White O."/>
            <person name="Venter J.C."/>
            <person name="Fraser C.M."/>
            <person name="Kaneko T."/>
            <person name="Nakamura Y."/>
            <person name="Sato S."/>
            <person name="Kato T."/>
            <person name="Asamizu E."/>
            <person name="Sasamoto S."/>
            <person name="Kimura T."/>
            <person name="Idesawa K."/>
            <person name="Kawashima K."/>
            <person name="Kishida Y."/>
            <person name="Kiyokawa C."/>
            <person name="Kohara M."/>
            <person name="Matsumoto M."/>
            <person name="Matsuno A."/>
            <person name="Muraki A."/>
            <person name="Nakayama S."/>
            <person name="Nakazaki N."/>
            <person name="Shinpo S."/>
            <person name="Takeuchi C."/>
            <person name="Wada T."/>
            <person name="Watanabe A."/>
            <person name="Yamada M."/>
            <person name="Yasuda M."/>
            <person name="Tabata S."/>
        </authorList>
    </citation>
    <scope>NUCLEOTIDE SEQUENCE [LARGE SCALE GENOMIC DNA]</scope>
    <source>
        <strain>cv. Columbia</strain>
    </source>
</reference>
<reference key="4">
    <citation type="journal article" date="2017" name="Plant J.">
        <title>Araport11: a complete reannotation of the Arabidopsis thaliana reference genome.</title>
        <authorList>
            <person name="Cheng C.Y."/>
            <person name="Krishnakumar V."/>
            <person name="Chan A.P."/>
            <person name="Thibaud-Nissen F."/>
            <person name="Schobel S."/>
            <person name="Town C.D."/>
        </authorList>
    </citation>
    <scope>GENOME REANNOTATION</scope>
    <source>
        <strain>cv. Columbia</strain>
    </source>
</reference>
<reference key="5">
    <citation type="submission" date="2006-10" db="EMBL/GenBank/DDBJ databases">
        <title>Arabidopsis ORF Clone.</title>
        <authorList>
            <person name="Bautista V.R."/>
            <person name="Kim C.J."/>
            <person name="Chen H."/>
            <person name="Quinitio C."/>
            <person name="Ecker J.R."/>
        </authorList>
    </citation>
    <scope>NUCLEOTIDE SEQUENCE [LARGE SCALE MRNA]</scope>
    <source>
        <strain>cv. Columbia</strain>
    </source>
</reference>
<reference key="6">
    <citation type="journal article" date="2003" name="Plant Physiol.">
        <title>Disruption of apyrases inhibits pollen germination in Arabidopsis.</title>
        <authorList>
            <person name="Steinebrunner I."/>
            <person name="Wu J."/>
            <person name="Sun Y."/>
            <person name="Corbett A."/>
            <person name="Roux S.J."/>
        </authorList>
    </citation>
    <scope>FUNCTION</scope>
    <scope>TISSUE SPECIFICITY</scope>
    <scope>DISRUPTION PHENOTYPE</scope>
    <source>
        <strain>cv. Wassilewskija</strain>
    </source>
</reference>
<reference key="7">
    <citation type="journal article" date="2007" name="Plant Mol. Biol.">
        <title>Developmental defects and seedling lethality in apyrase AtAPY1 and AtAPY2 double knockout mutants.</title>
        <authorList>
            <person name="Wolf C."/>
            <person name="Hennig M."/>
            <person name="Romanovicz D."/>
            <person name="Steinebrunner I."/>
        </authorList>
    </citation>
    <scope>FUNCTION</scope>
    <scope>TISSUE SPECIFICITY</scope>
    <scope>DISRUPTION PHENOTYPE</scope>
    <source>
        <strain>cv. Wassilewskija</strain>
    </source>
</reference>
<reference key="8">
    <citation type="journal article" date="2007" name="Plant Physiol.">
        <title>Apyrases (nucleoside triphosphate-diphosphohydrolases) play a key role in growth control in Arabidopsis.</title>
        <authorList>
            <person name="Wu J."/>
            <person name="Steinebrunner I."/>
            <person name="Sun Y."/>
            <person name="Butterfield T."/>
            <person name="Torres J."/>
            <person name="Arnold D."/>
            <person name="Gonzalez A."/>
            <person name="Jacob F."/>
            <person name="Reichler S."/>
            <person name="Roux S.J."/>
        </authorList>
    </citation>
    <scope>FUNCTION</scope>
    <scope>TISSUE SPECIFICITY</scope>
    <scope>DISRUPTION PHENOTYPE</scope>
    <source>
        <strain>cv. Wassilewskija</strain>
    </source>
</reference>
<reference key="9">
    <citation type="journal article" date="2009" name="Biosci. Biotechnol. Biochem.">
        <title>Hypertonic stress increased extracellular ATP levels and the expression of stress-responsive genes in Arabidopsis thaliana seedlings.</title>
        <authorList>
            <person name="Kim S.H."/>
            <person name="Yang S.H."/>
            <person name="Kim T.J."/>
            <person name="Han J.S."/>
            <person name="Suh J.W."/>
        </authorList>
    </citation>
    <scope>INDUCTION</scope>
</reference>
<reference key="10">
    <citation type="journal article" date="2011" name="Plant Physiol.">
        <title>Extracellular nucleotides and apyrases regulate stomatal aperture in Arabidopsis.</title>
        <authorList>
            <person name="Clark G."/>
            <person name="Fraley D."/>
            <person name="Steinebrunner I."/>
            <person name="Cervantes A."/>
            <person name="Onyirimba J."/>
            <person name="Liu A."/>
            <person name="Torres J."/>
            <person name="Tang W."/>
            <person name="Kim J."/>
            <person name="Roux S.J."/>
        </authorList>
    </citation>
    <scope>FUNCTION</scope>
    <source>
        <strain>cv. Wassilewskija</strain>
    </source>
</reference>
<sequence>MTAKRAIGRHESLADKVHRHRGLLLVISIPIVLIALVLLLMPGTSTSVSVIEYTMKNHEGGSNSRGPKNYAVIFDAGSSGSRVHVYCFDQNLDLVPLENELELFLQLKPGLSAYPNDPRQSANSLVTLLDKAEASVPRELRPKTPVRVGATAGLRALGHQASENILQAVRELLKGRSRLKTEANAVTVLDGTQEGSYQWVTINYLLRTLGKPYSDTVGVVDLGGGSVQMAYAIPEEDAATAPKPVEGEDSYVREMYLKGRKYFLYVHSYLHYGLLAARAEILKVSEDSNNPCIATGYAGTYKYGGKAFKAAASPSGASLDECRRVAINALKVNNSLCTHMKCTFGGVWNGGGGGGQKKMFVASFFFDRAAEAGFVDPNQPVAEVRPLDFEKAANKACNMRMEEGKSKFPRVEEDNLPYLCLDLVYQYTLLVDGFGLKPSQTITLVKKVKYGDYAVEAAWPLGSAIEAVSSP</sequence>
<keyword id="KW-0067">ATP-binding</keyword>
<keyword id="KW-0106">Calcium</keyword>
<keyword id="KW-0325">Glycoprotein</keyword>
<keyword id="KW-0333">Golgi apparatus</keyword>
<keyword id="KW-0378">Hydrolase</keyword>
<keyword id="KW-0472">Membrane</keyword>
<keyword id="KW-0547">Nucleotide-binding</keyword>
<keyword id="KW-1185">Reference proteome</keyword>
<keyword id="KW-0735">Signal-anchor</keyword>
<keyword id="KW-0812">Transmembrane</keyword>
<keyword id="KW-1133">Transmembrane helix</keyword>
<feature type="chain" id="PRO_0000419905" description="Apyrase 1">
    <location>
        <begin position="1"/>
        <end position="471"/>
    </location>
</feature>
<feature type="topological domain" description="Cytoplasmic" evidence="2">
    <location>
        <begin position="1"/>
        <end position="21"/>
    </location>
</feature>
<feature type="transmembrane region" description="Helical; Signal-anchor for type II membrane protein" evidence="2">
    <location>
        <begin position="22"/>
        <end position="42"/>
    </location>
</feature>
<feature type="topological domain" description="Lumenal" evidence="2">
    <location>
        <begin position="43"/>
        <end position="471"/>
    </location>
</feature>
<feature type="active site" description="Proton acceptor" evidence="1">
    <location>
        <position position="194"/>
    </location>
</feature>
<feature type="binding site" evidence="10">
    <location>
        <begin position="72"/>
        <end position="82"/>
    </location>
    <ligand>
        <name>ATP</name>
        <dbReference type="ChEBI" id="CHEBI:30616"/>
    </ligand>
</feature>
<feature type="binding site" evidence="10">
    <location>
        <begin position="218"/>
        <end position="228"/>
    </location>
    <ligand>
        <name>ATP</name>
        <dbReference type="ChEBI" id="CHEBI:30616"/>
    </ligand>
</feature>
<feature type="glycosylation site" description="N-linked (GlcNAc...) asparagine" evidence="2">
    <location>
        <position position="333"/>
    </location>
</feature>
<name>APY1_ARATH</name>
<comment type="function">
    <text evidence="3 4 5 7 9">Catalyzes the hydrolysis of phosphoanhydride bonds of nucleoside tri- and di-phosphates. Substrate preference is ATP &gt; ADP. Functions with APY2 to reduce extracellular ATP level which is essential for pollen germination and normal plant development. Plays a role in the regulation of stomatal function by modulating extracellular ATP levels in guard cells.</text>
</comment>
<comment type="catalytic activity">
    <reaction>
        <text>a ribonucleoside 5'-triphosphate + 2 H2O = a ribonucleoside 5'-phosphate + 2 phosphate + 2 H(+)</text>
        <dbReference type="Rhea" id="RHEA:36795"/>
        <dbReference type="ChEBI" id="CHEBI:15377"/>
        <dbReference type="ChEBI" id="CHEBI:15378"/>
        <dbReference type="ChEBI" id="CHEBI:43474"/>
        <dbReference type="ChEBI" id="CHEBI:58043"/>
        <dbReference type="ChEBI" id="CHEBI:61557"/>
        <dbReference type="EC" id="3.6.1.5"/>
    </reaction>
</comment>
<comment type="cofactor">
    <cofactor evidence="9">
        <name>Ca(2+)</name>
        <dbReference type="ChEBI" id="CHEBI:29108"/>
    </cofactor>
</comment>
<comment type="biophysicochemical properties">
    <kinetics>
        <KM evidence="9">30 uM for ATP</KM>
        <Vmax evidence="9">26.0 umol/min/mg enzyme</Vmax>
    </kinetics>
</comment>
<comment type="subcellular location">
    <subcellularLocation>
        <location evidence="8">Golgi apparatus membrane</location>
        <topology evidence="8">Single-pass type II membrane protein</topology>
    </subcellularLocation>
    <subcellularLocation>
        <location evidence="11">Membrane</location>
        <topology evidence="11">Single-pass type II membrane protein</topology>
    </subcellularLocation>
    <text>As cell membrane protein, the functional domain could be at the extracellular side.</text>
</comment>
<comment type="tissue specificity">
    <text evidence="3 4 5 9">Expressed in roots, root hairs, root cap, leaves, stems, trichomes, phloem throughout the plant, guard cells, filaments of young stamens, stipules, papillae of stigmas, pollen, pollen tubes and the abscission zone of siliques.</text>
</comment>
<comment type="induction">
    <text evidence="6">By hypertonic stress.</text>
</comment>
<comment type="disruption phenotype">
    <text evidence="3 4 5">No visible phenotype under normal growth conditions. Apy1 and apy2 double mutant displays developmental defects including the lack of functional root and shoot meristems, and morphogenetic and patterning abnormalities of the cotyledons. Double mutant exhibits a complete inhibition of pollen germination.</text>
</comment>
<comment type="similarity">
    <text evidence="10">Belongs to the GDA1/CD39 NTPase family.</text>
</comment>
<proteinExistence type="evidence at protein level"/>
<evidence type="ECO:0000250" key="1"/>
<evidence type="ECO:0000255" key="2"/>
<evidence type="ECO:0000269" key="3">
    <source>
    </source>
</evidence>
<evidence type="ECO:0000269" key="4">
    <source>
    </source>
</evidence>
<evidence type="ECO:0000269" key="5">
    <source>
    </source>
</evidence>
<evidence type="ECO:0000269" key="6">
    <source>
    </source>
</evidence>
<evidence type="ECO:0000269" key="7">
    <source>
    </source>
</evidence>
<evidence type="ECO:0000269" key="8">
    <source>
    </source>
</evidence>
<evidence type="ECO:0000269" key="9">
    <source ref="1"/>
</evidence>
<evidence type="ECO:0000305" key="10"/>
<evidence type="ECO:0000305" key="11">
    <source>
    </source>
</evidence>
<dbReference type="EC" id="3.6.1.5"/>
<dbReference type="EMBL" id="AF093604">
    <property type="protein sequence ID" value="AAF00071.1"/>
    <property type="molecule type" value="mRNA"/>
</dbReference>
<dbReference type="EMBL" id="JQ937231">
    <property type="protein sequence ID" value="AFI41199.1"/>
    <property type="molecule type" value="mRNA"/>
</dbReference>
<dbReference type="EMBL" id="AC016829">
    <property type="protein sequence ID" value="AAF26805.1"/>
    <property type="molecule type" value="Genomic_DNA"/>
</dbReference>
<dbReference type="EMBL" id="CP002686">
    <property type="protein sequence ID" value="AEE74035.1"/>
    <property type="molecule type" value="Genomic_DNA"/>
</dbReference>
<dbReference type="EMBL" id="BT029157">
    <property type="protein sequence ID" value="ABJ17092.1"/>
    <property type="molecule type" value="mRNA"/>
</dbReference>
<dbReference type="RefSeq" id="NP_187058.1">
    <property type="nucleotide sequence ID" value="NM_111279.5"/>
</dbReference>
<dbReference type="SMR" id="Q9SQG2"/>
<dbReference type="FunCoup" id="Q9SQG2">
    <property type="interactions" value="4031"/>
</dbReference>
<dbReference type="STRING" id="3702.Q9SQG2"/>
<dbReference type="GlyCosmos" id="Q9SQG2">
    <property type="glycosylation" value="1 site, No reported glycans"/>
</dbReference>
<dbReference type="GlyGen" id="Q9SQG2">
    <property type="glycosylation" value="1 site"/>
</dbReference>
<dbReference type="PaxDb" id="3702-AT3G04080.1"/>
<dbReference type="ProteomicsDB" id="244488"/>
<dbReference type="EnsemblPlants" id="AT3G04080.1">
    <property type="protein sequence ID" value="AT3G04080.1"/>
    <property type="gene ID" value="AT3G04080"/>
</dbReference>
<dbReference type="GeneID" id="819563"/>
<dbReference type="Gramene" id="AT3G04080.1">
    <property type="protein sequence ID" value="AT3G04080.1"/>
    <property type="gene ID" value="AT3G04080"/>
</dbReference>
<dbReference type="KEGG" id="ath:AT3G04080"/>
<dbReference type="Araport" id="AT3G04080"/>
<dbReference type="TAIR" id="AT3G04080">
    <property type="gene designation" value="APY1"/>
</dbReference>
<dbReference type="eggNOG" id="KOG1385">
    <property type="taxonomic scope" value="Eukaryota"/>
</dbReference>
<dbReference type="HOGENOM" id="CLU_010246_0_0_1"/>
<dbReference type="InParanoid" id="Q9SQG2"/>
<dbReference type="OMA" id="CLVENMN"/>
<dbReference type="PhylomeDB" id="Q9SQG2"/>
<dbReference type="BioCyc" id="ARA:AT3G04080-MONOMER"/>
<dbReference type="BRENDA" id="3.6.1.5">
    <property type="organism ID" value="399"/>
</dbReference>
<dbReference type="BRENDA" id="3.6.1.6">
    <property type="organism ID" value="399"/>
</dbReference>
<dbReference type="PRO" id="PR:Q9SQG2"/>
<dbReference type="Proteomes" id="UP000006548">
    <property type="component" value="Chromosome 3"/>
</dbReference>
<dbReference type="ExpressionAtlas" id="Q9SQG2">
    <property type="expression patterns" value="baseline and differential"/>
</dbReference>
<dbReference type="GO" id="GO:0005768">
    <property type="term" value="C:endosome"/>
    <property type="evidence" value="ECO:0007005"/>
    <property type="project" value="TAIR"/>
</dbReference>
<dbReference type="GO" id="GO:0005794">
    <property type="term" value="C:Golgi apparatus"/>
    <property type="evidence" value="ECO:0000314"/>
    <property type="project" value="TAIR"/>
</dbReference>
<dbReference type="GO" id="GO:0005797">
    <property type="term" value="C:Golgi medial cisterna"/>
    <property type="evidence" value="ECO:0007005"/>
    <property type="project" value="TAIR"/>
</dbReference>
<dbReference type="GO" id="GO:0000139">
    <property type="term" value="C:Golgi membrane"/>
    <property type="evidence" value="ECO:0007669"/>
    <property type="project" value="UniProtKB-SubCell"/>
</dbReference>
<dbReference type="GO" id="GO:0005802">
    <property type="term" value="C:trans-Golgi network"/>
    <property type="evidence" value="ECO:0007005"/>
    <property type="project" value="TAIR"/>
</dbReference>
<dbReference type="GO" id="GO:0004050">
    <property type="term" value="F:apyrase activity"/>
    <property type="evidence" value="ECO:0007669"/>
    <property type="project" value="UniProtKB-EC"/>
</dbReference>
<dbReference type="GO" id="GO:0005524">
    <property type="term" value="F:ATP binding"/>
    <property type="evidence" value="ECO:0007669"/>
    <property type="project" value="UniProtKB-KW"/>
</dbReference>
<dbReference type="GO" id="GO:0004382">
    <property type="term" value="F:GDP phosphatase activity"/>
    <property type="evidence" value="ECO:0000314"/>
    <property type="project" value="TAIR"/>
</dbReference>
<dbReference type="GO" id="GO:0045134">
    <property type="term" value="F:UDP phosphatase activity"/>
    <property type="evidence" value="ECO:0000314"/>
    <property type="project" value="TAIR"/>
</dbReference>
<dbReference type="GO" id="GO:0009846">
    <property type="term" value="P:pollen germination"/>
    <property type="evidence" value="ECO:0000316"/>
    <property type="project" value="TAIR"/>
</dbReference>
<dbReference type="CDD" id="cd24041">
    <property type="entry name" value="ASKHA_NBD_AtAPY1-like"/>
    <property type="match status" value="1"/>
</dbReference>
<dbReference type="FunFam" id="3.30.420.150:FF:000008">
    <property type="entry name" value="Apyrase 1"/>
    <property type="match status" value="1"/>
</dbReference>
<dbReference type="Gene3D" id="3.30.420.40">
    <property type="match status" value="1"/>
</dbReference>
<dbReference type="Gene3D" id="3.30.420.150">
    <property type="entry name" value="Exopolyphosphatase. Domain 2"/>
    <property type="match status" value="1"/>
</dbReference>
<dbReference type="InterPro" id="IPR000407">
    <property type="entry name" value="GDA1_CD39_NTPase"/>
</dbReference>
<dbReference type="PANTHER" id="PTHR11782">
    <property type="entry name" value="ADENOSINE/GUANOSINE DIPHOSPHATASE"/>
    <property type="match status" value="1"/>
</dbReference>
<dbReference type="PANTHER" id="PTHR11782:SF83">
    <property type="entry name" value="GUANOSINE-DIPHOSPHATASE"/>
    <property type="match status" value="1"/>
</dbReference>
<dbReference type="Pfam" id="PF01150">
    <property type="entry name" value="GDA1_CD39"/>
    <property type="match status" value="1"/>
</dbReference>
<dbReference type="PROSITE" id="PS01238">
    <property type="entry name" value="GDA1_CD39_NTPASE"/>
    <property type="match status" value="1"/>
</dbReference>
<accession>Q9SQG2</accession>
<organism>
    <name type="scientific">Arabidopsis thaliana</name>
    <name type="common">Mouse-ear cress</name>
    <dbReference type="NCBI Taxonomy" id="3702"/>
    <lineage>
        <taxon>Eukaryota</taxon>
        <taxon>Viridiplantae</taxon>
        <taxon>Streptophyta</taxon>
        <taxon>Embryophyta</taxon>
        <taxon>Tracheophyta</taxon>
        <taxon>Spermatophyta</taxon>
        <taxon>Magnoliopsida</taxon>
        <taxon>eudicotyledons</taxon>
        <taxon>Gunneridae</taxon>
        <taxon>Pentapetalae</taxon>
        <taxon>rosids</taxon>
        <taxon>malvids</taxon>
        <taxon>Brassicales</taxon>
        <taxon>Brassicaceae</taxon>
        <taxon>Camelineae</taxon>
        <taxon>Arabidopsis</taxon>
    </lineage>
</organism>
<gene>
    <name type="primary">APY1</name>
    <name type="ordered locus">At3g04080</name>
    <name type="ORF">T6K12.30</name>
</gene>